<evidence type="ECO:0000255" key="1">
    <source>
        <dbReference type="HAMAP-Rule" id="MF_01341"/>
    </source>
</evidence>
<evidence type="ECO:0000256" key="2">
    <source>
        <dbReference type="SAM" id="MobiDB-lite"/>
    </source>
</evidence>
<evidence type="ECO:0000305" key="3"/>
<name>RL15_PHEZH</name>
<reference key="1">
    <citation type="journal article" date="2008" name="BMC Genomics">
        <title>Complete genome of Phenylobacterium zucineum - a novel facultative intracellular bacterium isolated from human erythroleukemia cell line K562.</title>
        <authorList>
            <person name="Luo Y."/>
            <person name="Xu X."/>
            <person name="Ding Z."/>
            <person name="Liu Z."/>
            <person name="Zhang B."/>
            <person name="Yan Z."/>
            <person name="Sun J."/>
            <person name="Hu S."/>
            <person name="Hu X."/>
        </authorList>
    </citation>
    <scope>NUCLEOTIDE SEQUENCE [LARGE SCALE GENOMIC DNA]</scope>
    <source>
        <strain>HLK1</strain>
    </source>
</reference>
<accession>B4R8N6</accession>
<comment type="function">
    <text evidence="1">Binds to the 23S rRNA.</text>
</comment>
<comment type="subunit">
    <text evidence="1">Part of the 50S ribosomal subunit.</text>
</comment>
<comment type="similarity">
    <text evidence="1">Belongs to the universal ribosomal protein uL15 family.</text>
</comment>
<dbReference type="EMBL" id="CP000747">
    <property type="protein sequence ID" value="ACG77663.1"/>
    <property type="molecule type" value="Genomic_DNA"/>
</dbReference>
<dbReference type="RefSeq" id="WP_012521807.1">
    <property type="nucleotide sequence ID" value="NC_011144.1"/>
</dbReference>
<dbReference type="SMR" id="B4R8N6"/>
<dbReference type="STRING" id="450851.PHZ_c1249"/>
<dbReference type="KEGG" id="pzu:PHZ_c1249"/>
<dbReference type="eggNOG" id="COG0200">
    <property type="taxonomic scope" value="Bacteria"/>
</dbReference>
<dbReference type="HOGENOM" id="CLU_055188_4_0_5"/>
<dbReference type="OrthoDB" id="9810293at2"/>
<dbReference type="Proteomes" id="UP000001868">
    <property type="component" value="Chromosome"/>
</dbReference>
<dbReference type="GO" id="GO:0022625">
    <property type="term" value="C:cytosolic large ribosomal subunit"/>
    <property type="evidence" value="ECO:0007669"/>
    <property type="project" value="TreeGrafter"/>
</dbReference>
<dbReference type="GO" id="GO:0019843">
    <property type="term" value="F:rRNA binding"/>
    <property type="evidence" value="ECO:0007669"/>
    <property type="project" value="UniProtKB-UniRule"/>
</dbReference>
<dbReference type="GO" id="GO:0003735">
    <property type="term" value="F:structural constituent of ribosome"/>
    <property type="evidence" value="ECO:0007669"/>
    <property type="project" value="InterPro"/>
</dbReference>
<dbReference type="GO" id="GO:0006412">
    <property type="term" value="P:translation"/>
    <property type="evidence" value="ECO:0007669"/>
    <property type="project" value="UniProtKB-UniRule"/>
</dbReference>
<dbReference type="Gene3D" id="3.100.10.10">
    <property type="match status" value="1"/>
</dbReference>
<dbReference type="HAMAP" id="MF_01341">
    <property type="entry name" value="Ribosomal_uL15"/>
    <property type="match status" value="1"/>
</dbReference>
<dbReference type="InterPro" id="IPR030878">
    <property type="entry name" value="Ribosomal_uL15"/>
</dbReference>
<dbReference type="InterPro" id="IPR021131">
    <property type="entry name" value="Ribosomal_uL15/eL18"/>
</dbReference>
<dbReference type="InterPro" id="IPR036227">
    <property type="entry name" value="Ribosomal_uL15/eL18_sf"/>
</dbReference>
<dbReference type="InterPro" id="IPR005749">
    <property type="entry name" value="Ribosomal_uL15_bac-type"/>
</dbReference>
<dbReference type="InterPro" id="IPR001196">
    <property type="entry name" value="Ribosomal_uL15_CS"/>
</dbReference>
<dbReference type="NCBIfam" id="TIGR01071">
    <property type="entry name" value="rplO_bact"/>
    <property type="match status" value="1"/>
</dbReference>
<dbReference type="PANTHER" id="PTHR12934">
    <property type="entry name" value="50S RIBOSOMAL PROTEIN L15"/>
    <property type="match status" value="1"/>
</dbReference>
<dbReference type="PANTHER" id="PTHR12934:SF11">
    <property type="entry name" value="LARGE RIBOSOMAL SUBUNIT PROTEIN UL15M"/>
    <property type="match status" value="1"/>
</dbReference>
<dbReference type="Pfam" id="PF00828">
    <property type="entry name" value="Ribosomal_L27A"/>
    <property type="match status" value="1"/>
</dbReference>
<dbReference type="SUPFAM" id="SSF52080">
    <property type="entry name" value="Ribosomal proteins L15p and L18e"/>
    <property type="match status" value="1"/>
</dbReference>
<dbReference type="PROSITE" id="PS00475">
    <property type="entry name" value="RIBOSOMAL_L15"/>
    <property type="match status" value="1"/>
</dbReference>
<feature type="chain" id="PRO_1000142856" description="Large ribosomal subunit protein uL15">
    <location>
        <begin position="1"/>
        <end position="164"/>
    </location>
</feature>
<feature type="region of interest" description="Disordered" evidence="2">
    <location>
        <begin position="1"/>
        <end position="49"/>
    </location>
</feature>
<feature type="region of interest" description="Disordered" evidence="2">
    <location>
        <begin position="143"/>
        <end position="164"/>
    </location>
</feature>
<feature type="compositionally biased region" description="Gly residues" evidence="2">
    <location>
        <begin position="22"/>
        <end position="36"/>
    </location>
</feature>
<keyword id="KW-1185">Reference proteome</keyword>
<keyword id="KW-0687">Ribonucleoprotein</keyword>
<keyword id="KW-0689">Ribosomal protein</keyword>
<keyword id="KW-0694">RNA-binding</keyword>
<keyword id="KW-0699">rRNA-binding</keyword>
<sequence length="164" mass="17256">MTKLNELAPREGSTKNRMRVGRGPGSGKGKTAGRGVKGQKARTGVSIAGFEGGQMPLHMRMPKRGFNSRNRKDFAEVNLWRIEQAIAAGKLDAKAAIDAEALLKAGVIRRAKDGVKLLGKGELKSKLNLTVYSATASARAAVEKAGGKLTTTKPEAAQDASAEA</sequence>
<proteinExistence type="inferred from homology"/>
<organism>
    <name type="scientific">Phenylobacterium zucineum (strain HLK1)</name>
    <dbReference type="NCBI Taxonomy" id="450851"/>
    <lineage>
        <taxon>Bacteria</taxon>
        <taxon>Pseudomonadati</taxon>
        <taxon>Pseudomonadota</taxon>
        <taxon>Alphaproteobacteria</taxon>
        <taxon>Caulobacterales</taxon>
        <taxon>Caulobacteraceae</taxon>
        <taxon>Phenylobacterium</taxon>
    </lineage>
</organism>
<gene>
    <name evidence="1" type="primary">rplO</name>
    <name type="ordered locus">PHZ_c1249</name>
</gene>
<protein>
    <recommendedName>
        <fullName evidence="1">Large ribosomal subunit protein uL15</fullName>
    </recommendedName>
    <alternativeName>
        <fullName evidence="3">50S ribosomal protein L15</fullName>
    </alternativeName>
</protein>